<keyword id="KW-0027">Amidation</keyword>
<keyword id="KW-1015">Disulfide bond</keyword>
<keyword id="KW-0960">Knottin</keyword>
<keyword id="KW-0528">Neurotoxin</keyword>
<keyword id="KW-0964">Secreted</keyword>
<keyword id="KW-0732">Signal</keyword>
<keyword id="KW-0800">Toxin</keyword>
<accession>Q5Y4Y2</accession>
<comment type="function">
    <text evidence="1">Insect active toxin causing rapid but reversible paralysis in crickets. No activity shown in mammals. Does not show effect on mammalian voltage-gated calcium channels (By similarity).</text>
</comment>
<comment type="subcellular location">
    <subcellularLocation>
        <location evidence="1">Secreted</location>
    </subcellularLocation>
</comment>
<comment type="tissue specificity">
    <text>Expressed by the venom gland.</text>
</comment>
<comment type="domain">
    <text evidence="1">The presence of a 'disulfide through disulfide knot' structurally defines this protein as a knottin.</text>
</comment>
<comment type="similarity">
    <text evidence="3">Belongs to the neurotoxin 01 (U2-agtx) family.</text>
</comment>
<protein>
    <recommendedName>
        <fullName>U2-agatoxin-Ao1d</fullName>
        <shortName>U2-AGTX-Ao1d</shortName>
    </recommendedName>
    <alternativeName>
        <fullName>Agel_03</fullName>
    </alternativeName>
</protein>
<proteinExistence type="evidence at transcript level"/>
<dbReference type="EMBL" id="AY681300">
    <property type="protein sequence ID" value="AAU93658.1"/>
    <property type="molecule type" value="mRNA"/>
</dbReference>
<dbReference type="SMR" id="Q5Y4Y2"/>
<dbReference type="ArachnoServer" id="AS000110">
    <property type="toxin name" value="U2-agatoxin-Ao1d"/>
</dbReference>
<dbReference type="GO" id="GO:0005576">
    <property type="term" value="C:extracellular region"/>
    <property type="evidence" value="ECO:0007669"/>
    <property type="project" value="UniProtKB-SubCell"/>
</dbReference>
<dbReference type="GO" id="GO:0090729">
    <property type="term" value="F:toxin activity"/>
    <property type="evidence" value="ECO:0007669"/>
    <property type="project" value="UniProtKB-KW"/>
</dbReference>
<dbReference type="Pfam" id="PF05980">
    <property type="entry name" value="Toxin_7"/>
    <property type="match status" value="1"/>
</dbReference>
<dbReference type="SUPFAM" id="SSF57059">
    <property type="entry name" value="omega toxin-like"/>
    <property type="match status" value="1"/>
</dbReference>
<organism>
    <name type="scientific">Agelena orientalis</name>
    <name type="common">Funnel-web spider</name>
    <dbReference type="NCBI Taxonomy" id="293813"/>
    <lineage>
        <taxon>Eukaryota</taxon>
        <taxon>Metazoa</taxon>
        <taxon>Ecdysozoa</taxon>
        <taxon>Arthropoda</taxon>
        <taxon>Chelicerata</taxon>
        <taxon>Arachnida</taxon>
        <taxon>Araneae</taxon>
        <taxon>Araneomorphae</taxon>
        <taxon>Entelegynae</taxon>
        <taxon>Agelenidae</taxon>
        <taxon>Agelena</taxon>
    </lineage>
</organism>
<reference key="1">
    <citation type="journal article" date="2005" name="Proteins">
        <title>A novel strategy for the identification of toxinlike structures in spider venom.</title>
        <authorList>
            <person name="Kozlov S.A."/>
            <person name="Malyavka A."/>
            <person name="McCutchen B."/>
            <person name="Lu A."/>
            <person name="Schepers E."/>
            <person name="Herrmann R."/>
            <person name="Grishin E.V."/>
        </authorList>
    </citation>
    <scope>NUCLEOTIDE SEQUENCE [MRNA]</scope>
    <source>
        <tissue>Venom gland</tissue>
    </source>
</reference>
<name>TAG2D_AGEOR</name>
<evidence type="ECO:0000250" key="1"/>
<evidence type="ECO:0000255" key="2"/>
<evidence type="ECO:0000305" key="3"/>
<sequence length="70" mass="7726">MRAIIYLLLISAMVFSMTKAVPEEEGLQLSEDERGGCLPHNRFCNALSGPRCCSGLKCKELSIYDSRCLG</sequence>
<feature type="signal peptide" evidence="2">
    <location>
        <begin position="1"/>
        <end position="20"/>
    </location>
</feature>
<feature type="propeptide" id="PRO_5000093609" evidence="2">
    <location>
        <begin position="21"/>
        <end position="34"/>
    </location>
</feature>
<feature type="chain" id="PRO_5000093610" description="U2-agatoxin-Ao1d">
    <location>
        <begin position="35"/>
        <end position="69"/>
    </location>
</feature>
<feature type="modified residue" description="Leucine amide" evidence="1">
    <location>
        <position position="69"/>
    </location>
</feature>
<feature type="disulfide bond" evidence="1">
    <location>
        <begin position="37"/>
        <end position="53"/>
    </location>
</feature>
<feature type="disulfide bond" evidence="1">
    <location>
        <begin position="44"/>
        <end position="58"/>
    </location>
</feature>
<feature type="disulfide bond" evidence="1">
    <location>
        <begin position="52"/>
        <end position="68"/>
    </location>
</feature>